<protein>
    <recommendedName>
        <fullName evidence="1">Protein PsiE</fullName>
    </recommendedName>
</protein>
<reference key="1">
    <citation type="journal article" date="2009" name="PLoS Genet.">
        <title>Organised genome dynamics in the Escherichia coli species results in highly diverse adaptive paths.</title>
        <authorList>
            <person name="Touchon M."/>
            <person name="Hoede C."/>
            <person name="Tenaillon O."/>
            <person name="Barbe V."/>
            <person name="Baeriswyl S."/>
            <person name="Bidet P."/>
            <person name="Bingen E."/>
            <person name="Bonacorsi S."/>
            <person name="Bouchier C."/>
            <person name="Bouvet O."/>
            <person name="Calteau A."/>
            <person name="Chiapello H."/>
            <person name="Clermont O."/>
            <person name="Cruveiller S."/>
            <person name="Danchin A."/>
            <person name="Diard M."/>
            <person name="Dossat C."/>
            <person name="Karoui M.E."/>
            <person name="Frapy E."/>
            <person name="Garry L."/>
            <person name="Ghigo J.M."/>
            <person name="Gilles A.M."/>
            <person name="Johnson J."/>
            <person name="Le Bouguenec C."/>
            <person name="Lescat M."/>
            <person name="Mangenot S."/>
            <person name="Martinez-Jehanne V."/>
            <person name="Matic I."/>
            <person name="Nassif X."/>
            <person name="Oztas S."/>
            <person name="Petit M.A."/>
            <person name="Pichon C."/>
            <person name="Rouy Z."/>
            <person name="Ruf C.S."/>
            <person name="Schneider D."/>
            <person name="Tourret J."/>
            <person name="Vacherie B."/>
            <person name="Vallenet D."/>
            <person name="Medigue C."/>
            <person name="Rocha E.P.C."/>
            <person name="Denamur E."/>
        </authorList>
    </citation>
    <scope>NUCLEOTIDE SEQUENCE [LARGE SCALE GENOMIC DNA]</scope>
    <source>
        <strain>55989 / EAEC</strain>
    </source>
</reference>
<keyword id="KW-0997">Cell inner membrane</keyword>
<keyword id="KW-1003">Cell membrane</keyword>
<keyword id="KW-0472">Membrane</keyword>
<keyword id="KW-1185">Reference proteome</keyword>
<keyword id="KW-0812">Transmembrane</keyword>
<keyword id="KW-1133">Transmembrane helix</keyword>
<name>PSIE_ECO55</name>
<organism>
    <name type="scientific">Escherichia coli (strain 55989 / EAEC)</name>
    <dbReference type="NCBI Taxonomy" id="585055"/>
    <lineage>
        <taxon>Bacteria</taxon>
        <taxon>Pseudomonadati</taxon>
        <taxon>Pseudomonadota</taxon>
        <taxon>Gammaproteobacteria</taxon>
        <taxon>Enterobacterales</taxon>
        <taxon>Enterobacteriaceae</taxon>
        <taxon>Escherichia</taxon>
    </lineage>
</organism>
<accession>B7LAX3</accession>
<comment type="subcellular location">
    <subcellularLocation>
        <location evidence="1">Cell inner membrane</location>
        <topology evidence="1">Multi-pass membrane protein</topology>
    </subcellularLocation>
</comment>
<comment type="similarity">
    <text evidence="1">Belongs to the PsiE family.</text>
</comment>
<sequence>MTSLSRPRVEFISTILQTVLNLGLLCLGLILVVFLGKETVHLADVLFAPEQTSKYELVEGLVVYFLYFEFIALIVKYFQSGFHFPLRYFVYIGITAIVRLIIVDHKSPLDVLIYSAAILLLVITLWLCNSKRLKRE</sequence>
<gene>
    <name evidence="1" type="primary">psiE</name>
    <name type="ordered locus">EC55989_4521</name>
</gene>
<evidence type="ECO:0000255" key="1">
    <source>
        <dbReference type="HAMAP-Rule" id="MF_01048"/>
    </source>
</evidence>
<dbReference type="EMBL" id="CU928145">
    <property type="protein sequence ID" value="CAV01305.1"/>
    <property type="molecule type" value="Genomic_DNA"/>
</dbReference>
<dbReference type="RefSeq" id="WP_000202902.1">
    <property type="nucleotide sequence ID" value="NZ_CP028304.1"/>
</dbReference>
<dbReference type="SMR" id="B7LAX3"/>
<dbReference type="GeneID" id="93777857"/>
<dbReference type="KEGG" id="eck:EC55989_4521"/>
<dbReference type="HOGENOM" id="CLU_127561_0_1_6"/>
<dbReference type="Proteomes" id="UP000000746">
    <property type="component" value="Chromosome"/>
</dbReference>
<dbReference type="GO" id="GO:0005886">
    <property type="term" value="C:plasma membrane"/>
    <property type="evidence" value="ECO:0007669"/>
    <property type="project" value="UniProtKB-SubCell"/>
</dbReference>
<dbReference type="GO" id="GO:0016036">
    <property type="term" value="P:cellular response to phosphate starvation"/>
    <property type="evidence" value="ECO:0007669"/>
    <property type="project" value="InterPro"/>
</dbReference>
<dbReference type="HAMAP" id="MF_01048">
    <property type="entry name" value="PsiE"/>
    <property type="match status" value="1"/>
</dbReference>
<dbReference type="InterPro" id="IPR009315">
    <property type="entry name" value="P_starv_induced_PsiE"/>
</dbReference>
<dbReference type="InterPro" id="IPR020948">
    <property type="entry name" value="P_starv_induced_PsiE-like"/>
</dbReference>
<dbReference type="NCBIfam" id="NF002764">
    <property type="entry name" value="PRK02833.1-2"/>
    <property type="match status" value="1"/>
</dbReference>
<dbReference type="NCBIfam" id="NF002765">
    <property type="entry name" value="PRK02833.1-3"/>
    <property type="match status" value="1"/>
</dbReference>
<dbReference type="NCBIfam" id="NF002767">
    <property type="entry name" value="PRK02833.1-5"/>
    <property type="match status" value="1"/>
</dbReference>
<dbReference type="PANTHER" id="PTHR37819">
    <property type="entry name" value="PROTEIN PSIE"/>
    <property type="match status" value="1"/>
</dbReference>
<dbReference type="PANTHER" id="PTHR37819:SF1">
    <property type="entry name" value="PROTEIN PSIE"/>
    <property type="match status" value="1"/>
</dbReference>
<dbReference type="Pfam" id="PF06146">
    <property type="entry name" value="PsiE"/>
    <property type="match status" value="1"/>
</dbReference>
<dbReference type="PIRSF" id="PIRSF029598">
    <property type="entry name" value="PsiE"/>
    <property type="match status" value="1"/>
</dbReference>
<feature type="chain" id="PRO_1000149614" description="Protein PsiE">
    <location>
        <begin position="1"/>
        <end position="136"/>
    </location>
</feature>
<feature type="transmembrane region" description="Helical" evidence="1">
    <location>
        <begin position="15"/>
        <end position="35"/>
    </location>
</feature>
<feature type="transmembrane region" description="Helical" evidence="1">
    <location>
        <begin position="55"/>
        <end position="75"/>
    </location>
</feature>
<feature type="transmembrane region" description="Helical" evidence="1">
    <location>
        <begin position="82"/>
        <end position="102"/>
    </location>
</feature>
<feature type="transmembrane region" description="Helical" evidence="1">
    <location>
        <begin position="108"/>
        <end position="128"/>
    </location>
</feature>
<proteinExistence type="inferred from homology"/>